<feature type="chain" id="PRO_0000144188" description="Cyclin-dependent kinase 4 inhibitor D">
    <location>
        <begin position="1"/>
        <end position="166"/>
    </location>
</feature>
<feature type="repeat" description="ANK 1">
    <location>
        <begin position="41"/>
        <end position="69"/>
    </location>
</feature>
<feature type="repeat" description="ANK 2">
    <location>
        <begin position="73"/>
        <end position="102"/>
    </location>
</feature>
<feature type="repeat" description="ANK 3">
    <location>
        <begin position="106"/>
        <end position="135"/>
    </location>
</feature>
<feature type="repeat" description="ANK 4">
    <location>
        <begin position="138"/>
        <end position="166"/>
    </location>
</feature>
<feature type="modified residue" description="N-acetylmethionine" evidence="1">
    <location>
        <position position="1"/>
    </location>
</feature>
<feature type="sequence conflict" description="In Ref. 2; AAA85436." evidence="5" ref="2">
    <original>Q</original>
    <variation>P</variation>
    <location>
        <position position="159"/>
    </location>
</feature>
<feature type="helix" evidence="6">
    <location>
        <begin position="8"/>
        <end position="18"/>
    </location>
</feature>
<feature type="helix" evidence="6">
    <location>
        <begin position="21"/>
        <end position="29"/>
    </location>
</feature>
<feature type="helix" evidence="6">
    <location>
        <begin position="45"/>
        <end position="48"/>
    </location>
</feature>
<feature type="helix" evidence="6">
    <location>
        <begin position="54"/>
        <end position="62"/>
    </location>
</feature>
<feature type="helix" evidence="6">
    <location>
        <begin position="77"/>
        <end position="83"/>
    </location>
</feature>
<feature type="helix" evidence="6">
    <location>
        <begin position="87"/>
        <end position="95"/>
    </location>
</feature>
<feature type="helix" evidence="6">
    <location>
        <begin position="110"/>
        <end position="117"/>
    </location>
</feature>
<feature type="helix" evidence="6">
    <location>
        <begin position="120"/>
        <end position="127"/>
    </location>
</feature>
<feature type="helix" evidence="6">
    <location>
        <begin position="142"/>
        <end position="148"/>
    </location>
</feature>
<feature type="helix" evidence="6">
    <location>
        <begin position="152"/>
        <end position="159"/>
    </location>
</feature>
<dbReference type="EMBL" id="U49399">
    <property type="protein sequence ID" value="AAB03772.1"/>
    <property type="molecule type" value="mRNA"/>
</dbReference>
<dbReference type="EMBL" id="U20498">
    <property type="protein sequence ID" value="AAA85436.1"/>
    <property type="molecule type" value="mRNA"/>
</dbReference>
<dbReference type="EMBL" id="U40343">
    <property type="protein sequence ID" value="AAB18139.1"/>
    <property type="molecule type" value="mRNA"/>
</dbReference>
<dbReference type="EMBL" id="AF061327">
    <property type="protein sequence ID" value="AAC27450.1"/>
    <property type="molecule type" value="Genomic_DNA"/>
</dbReference>
<dbReference type="EMBL" id="CR542158">
    <property type="protein sequence ID" value="CAG46955.1"/>
    <property type="molecule type" value="mRNA"/>
</dbReference>
<dbReference type="EMBL" id="AF518878">
    <property type="protein sequence ID" value="AAM54045.1"/>
    <property type="molecule type" value="Genomic_DNA"/>
</dbReference>
<dbReference type="EMBL" id="BC001822">
    <property type="protein sequence ID" value="AAH01822.1"/>
    <property type="molecule type" value="mRNA"/>
</dbReference>
<dbReference type="EMBL" id="AF044171">
    <property type="protein sequence ID" value="AAD02320.1"/>
    <property type="molecule type" value="Genomic_DNA"/>
</dbReference>
<dbReference type="CCDS" id="CCDS12244.1"/>
<dbReference type="PIR" id="A57378">
    <property type="entry name" value="A57378"/>
</dbReference>
<dbReference type="RefSeq" id="NP_001791.1">
    <property type="nucleotide sequence ID" value="NM_001800.4"/>
</dbReference>
<dbReference type="RefSeq" id="NP_524145.1">
    <property type="nucleotide sequence ID" value="NM_079421.3"/>
</dbReference>
<dbReference type="PDB" id="1BD8">
    <property type="method" value="X-ray"/>
    <property type="resolution" value="1.80 A"/>
    <property type="chains" value="A=7-162"/>
</dbReference>
<dbReference type="PDB" id="1BI8">
    <property type="method" value="X-ray"/>
    <property type="resolution" value="2.80 A"/>
    <property type="chains" value="B/D=1-166"/>
</dbReference>
<dbReference type="PDBsum" id="1BD8"/>
<dbReference type="PDBsum" id="1BI8"/>
<dbReference type="SMR" id="P55273"/>
<dbReference type="BioGRID" id="107466">
    <property type="interactions" value="79"/>
</dbReference>
<dbReference type="DIP" id="DIP-6109N"/>
<dbReference type="FunCoup" id="P55273">
    <property type="interactions" value="1455"/>
</dbReference>
<dbReference type="IntAct" id="P55273">
    <property type="interactions" value="62"/>
</dbReference>
<dbReference type="MINT" id="P55273"/>
<dbReference type="STRING" id="9606.ENSP00000377224"/>
<dbReference type="iPTMnet" id="P55273"/>
<dbReference type="PhosphoSitePlus" id="P55273"/>
<dbReference type="BioMuta" id="CDKN2D"/>
<dbReference type="DMDM" id="1705730"/>
<dbReference type="jPOST" id="P55273"/>
<dbReference type="MassIVE" id="P55273"/>
<dbReference type="PaxDb" id="9606-ENSP00000377224"/>
<dbReference type="PeptideAtlas" id="P55273"/>
<dbReference type="ProteomicsDB" id="56832"/>
<dbReference type="Antibodypedia" id="4404">
    <property type="antibodies" value="296 antibodies from 34 providers"/>
</dbReference>
<dbReference type="DNASU" id="1032"/>
<dbReference type="Ensembl" id="ENST00000335766.2">
    <property type="protein sequence ID" value="ENSP00000337056.1"/>
    <property type="gene ID" value="ENSG00000129355.7"/>
</dbReference>
<dbReference type="Ensembl" id="ENST00000393599.3">
    <property type="protein sequence ID" value="ENSP00000377224.1"/>
    <property type="gene ID" value="ENSG00000129355.7"/>
</dbReference>
<dbReference type="GeneID" id="1032"/>
<dbReference type="KEGG" id="hsa:1032"/>
<dbReference type="MANE-Select" id="ENST00000393599.3">
    <property type="protein sequence ID" value="ENSP00000377224.1"/>
    <property type="RefSeq nucleotide sequence ID" value="NM_001800.4"/>
    <property type="RefSeq protein sequence ID" value="NP_001791.1"/>
</dbReference>
<dbReference type="UCSC" id="uc002mpa.4">
    <property type="organism name" value="human"/>
</dbReference>
<dbReference type="AGR" id="HGNC:1790"/>
<dbReference type="CTD" id="1032"/>
<dbReference type="DisGeNET" id="1032"/>
<dbReference type="GeneCards" id="CDKN2D"/>
<dbReference type="HGNC" id="HGNC:1790">
    <property type="gene designation" value="CDKN2D"/>
</dbReference>
<dbReference type="HPA" id="ENSG00000129355">
    <property type="expression patterns" value="Group enriched (bone marrow, brain, lymphoid tissue)"/>
</dbReference>
<dbReference type="MIM" id="600927">
    <property type="type" value="gene"/>
</dbReference>
<dbReference type="neXtProt" id="NX_P55273"/>
<dbReference type="OpenTargets" id="ENSG00000129355"/>
<dbReference type="PharmGKB" id="PA26323"/>
<dbReference type="VEuPathDB" id="HostDB:ENSG00000129355"/>
<dbReference type="eggNOG" id="KOG0504">
    <property type="taxonomic scope" value="Eukaryota"/>
</dbReference>
<dbReference type="GeneTree" id="ENSGT00940000159801"/>
<dbReference type="HOGENOM" id="CLU_000134_37_0_1"/>
<dbReference type="InParanoid" id="P55273"/>
<dbReference type="OMA" id="HTDVVCF"/>
<dbReference type="OrthoDB" id="21416at2759"/>
<dbReference type="PAN-GO" id="P55273">
    <property type="GO annotations" value="7 GO annotations based on evolutionary models"/>
</dbReference>
<dbReference type="PhylomeDB" id="P55273"/>
<dbReference type="TreeFam" id="TF333311"/>
<dbReference type="PathwayCommons" id="P55273"/>
<dbReference type="Reactome" id="R-HSA-2559580">
    <property type="pathway name" value="Oxidative Stress Induced Senescence"/>
</dbReference>
<dbReference type="Reactome" id="R-HSA-2559582">
    <property type="pathway name" value="Senescence-Associated Secretory Phenotype (SASP)"/>
</dbReference>
<dbReference type="Reactome" id="R-HSA-2559585">
    <property type="pathway name" value="Oncogene Induced Senescence"/>
</dbReference>
<dbReference type="Reactome" id="R-HSA-69231">
    <property type="pathway name" value="Cyclin D associated events in G1"/>
</dbReference>
<dbReference type="SignaLink" id="P55273"/>
<dbReference type="SIGNOR" id="P55273"/>
<dbReference type="BioGRID-ORCS" id="1032">
    <property type="hits" value="16 hits in 1167 CRISPR screens"/>
</dbReference>
<dbReference type="EvolutionaryTrace" id="P55273"/>
<dbReference type="GeneWiki" id="CDKN2D"/>
<dbReference type="GenomeRNAi" id="1032"/>
<dbReference type="Pharos" id="P55273">
    <property type="development level" value="Tbio"/>
</dbReference>
<dbReference type="PRO" id="PR:P55273"/>
<dbReference type="Proteomes" id="UP000005640">
    <property type="component" value="Chromosome 19"/>
</dbReference>
<dbReference type="RNAct" id="P55273">
    <property type="molecule type" value="protein"/>
</dbReference>
<dbReference type="Bgee" id="ENSG00000129355">
    <property type="expression patterns" value="Expressed in monocyte and 129 other cell types or tissues"/>
</dbReference>
<dbReference type="ExpressionAtlas" id="P55273">
    <property type="expression patterns" value="baseline and differential"/>
</dbReference>
<dbReference type="GO" id="GO:0097129">
    <property type="term" value="C:cyclin D2-CDK4 complex"/>
    <property type="evidence" value="ECO:0007669"/>
    <property type="project" value="Ensembl"/>
</dbReference>
<dbReference type="GO" id="GO:0005737">
    <property type="term" value="C:cytoplasm"/>
    <property type="evidence" value="ECO:0000314"/>
    <property type="project" value="BHF-UCL"/>
</dbReference>
<dbReference type="GO" id="GO:0005829">
    <property type="term" value="C:cytosol"/>
    <property type="evidence" value="ECO:0000314"/>
    <property type="project" value="HPA"/>
</dbReference>
<dbReference type="GO" id="GO:0005654">
    <property type="term" value="C:nucleoplasm"/>
    <property type="evidence" value="ECO:0000314"/>
    <property type="project" value="HPA"/>
</dbReference>
<dbReference type="GO" id="GO:0005634">
    <property type="term" value="C:nucleus"/>
    <property type="evidence" value="ECO:0000314"/>
    <property type="project" value="BHF-UCL"/>
</dbReference>
<dbReference type="GO" id="GO:0004861">
    <property type="term" value="F:cyclin-dependent protein serine/threonine kinase inhibitor activity"/>
    <property type="evidence" value="ECO:0000314"/>
    <property type="project" value="BHF-UCL"/>
</dbReference>
<dbReference type="GO" id="GO:0019901">
    <property type="term" value="F:protein kinase binding"/>
    <property type="evidence" value="ECO:0000353"/>
    <property type="project" value="BHF-UCL"/>
</dbReference>
<dbReference type="GO" id="GO:0048102">
    <property type="term" value="P:autophagic cell death"/>
    <property type="evidence" value="ECO:0000315"/>
    <property type="project" value="BHF-UCL"/>
</dbReference>
<dbReference type="GO" id="GO:0000731">
    <property type="term" value="P:DNA synthesis involved in DNA repair"/>
    <property type="evidence" value="ECO:0000315"/>
    <property type="project" value="BHF-UCL"/>
</dbReference>
<dbReference type="GO" id="GO:0030308">
    <property type="term" value="P:negative regulation of cell growth"/>
    <property type="evidence" value="ECO:0000314"/>
    <property type="project" value="BHF-UCL"/>
</dbReference>
<dbReference type="GO" id="GO:0008285">
    <property type="term" value="P:negative regulation of cell population proliferation"/>
    <property type="evidence" value="ECO:0000314"/>
    <property type="project" value="BHF-UCL"/>
</dbReference>
<dbReference type="GO" id="GO:2000134">
    <property type="term" value="P:negative regulation of G1/S transition of mitotic cell cycle"/>
    <property type="evidence" value="ECO:0000314"/>
    <property type="project" value="BHF-UCL"/>
</dbReference>
<dbReference type="GO" id="GO:1902230">
    <property type="term" value="P:negative regulation of intrinsic apoptotic signaling pathway in response to DNA damage"/>
    <property type="evidence" value="ECO:0000315"/>
    <property type="project" value="BHF-UCL"/>
</dbReference>
<dbReference type="GO" id="GO:2000045">
    <property type="term" value="P:regulation of G1/S transition of mitotic cell cycle"/>
    <property type="evidence" value="ECO:0000314"/>
    <property type="project" value="BHF-UCL"/>
</dbReference>
<dbReference type="GO" id="GO:0032526">
    <property type="term" value="P:response to retinoic acid"/>
    <property type="evidence" value="ECO:0000315"/>
    <property type="project" value="BHF-UCL"/>
</dbReference>
<dbReference type="GO" id="GO:0009411">
    <property type="term" value="P:response to UV"/>
    <property type="evidence" value="ECO:0000315"/>
    <property type="project" value="BHF-UCL"/>
</dbReference>
<dbReference type="GO" id="GO:0033280">
    <property type="term" value="P:response to vitamin D"/>
    <property type="evidence" value="ECO:0000315"/>
    <property type="project" value="BHF-UCL"/>
</dbReference>
<dbReference type="GO" id="GO:0007605">
    <property type="term" value="P:sensory perception of sound"/>
    <property type="evidence" value="ECO:0007669"/>
    <property type="project" value="Ensembl"/>
</dbReference>
<dbReference type="FunFam" id="1.25.40.20:FF:000169">
    <property type="entry name" value="Cyclin-dependent kinase 4 inhibitor D"/>
    <property type="match status" value="1"/>
</dbReference>
<dbReference type="Gene3D" id="1.25.40.20">
    <property type="entry name" value="Ankyrin repeat-containing domain"/>
    <property type="match status" value="1"/>
</dbReference>
<dbReference type="InterPro" id="IPR050776">
    <property type="entry name" value="Ank_Repeat/CDKN_Inhibitor"/>
</dbReference>
<dbReference type="InterPro" id="IPR002110">
    <property type="entry name" value="Ankyrin_rpt"/>
</dbReference>
<dbReference type="InterPro" id="IPR036770">
    <property type="entry name" value="Ankyrin_rpt-contain_sf"/>
</dbReference>
<dbReference type="PANTHER" id="PTHR24201">
    <property type="entry name" value="ANK_REP_REGION DOMAIN-CONTAINING PROTEIN"/>
    <property type="match status" value="1"/>
</dbReference>
<dbReference type="PANTHER" id="PTHR24201:SF7">
    <property type="entry name" value="CYCLIN-DEPENDENT KINASE 4 INHIBITOR D"/>
    <property type="match status" value="1"/>
</dbReference>
<dbReference type="Pfam" id="PF00023">
    <property type="entry name" value="Ank"/>
    <property type="match status" value="1"/>
</dbReference>
<dbReference type="Pfam" id="PF12796">
    <property type="entry name" value="Ank_2"/>
    <property type="match status" value="1"/>
</dbReference>
<dbReference type="SMART" id="SM00248">
    <property type="entry name" value="ANK"/>
    <property type="match status" value="4"/>
</dbReference>
<dbReference type="SUPFAM" id="SSF48403">
    <property type="entry name" value="Ankyrin repeat"/>
    <property type="match status" value="1"/>
</dbReference>
<dbReference type="PROSITE" id="PS50297">
    <property type="entry name" value="ANK_REP_REGION"/>
    <property type="match status" value="1"/>
</dbReference>
<dbReference type="PROSITE" id="PS50088">
    <property type="entry name" value="ANK_REPEAT"/>
    <property type="match status" value="1"/>
</dbReference>
<accession>P55273</accession>
<accession>Q13102</accession>
<accession>Q6FGE9</accession>
<proteinExistence type="evidence at protein level"/>
<organism>
    <name type="scientific">Homo sapiens</name>
    <name type="common">Human</name>
    <dbReference type="NCBI Taxonomy" id="9606"/>
    <lineage>
        <taxon>Eukaryota</taxon>
        <taxon>Metazoa</taxon>
        <taxon>Chordata</taxon>
        <taxon>Craniata</taxon>
        <taxon>Vertebrata</taxon>
        <taxon>Euteleostomi</taxon>
        <taxon>Mammalia</taxon>
        <taxon>Eutheria</taxon>
        <taxon>Euarchontoglires</taxon>
        <taxon>Primates</taxon>
        <taxon>Haplorrhini</taxon>
        <taxon>Catarrhini</taxon>
        <taxon>Hominidae</taxon>
        <taxon>Homo</taxon>
    </lineage>
</organism>
<gene>
    <name type="primary">CDKN2D</name>
</gene>
<evidence type="ECO:0000269" key="1">
    <source>
    </source>
</evidence>
<evidence type="ECO:0000269" key="2">
    <source>
    </source>
</evidence>
<evidence type="ECO:0000269" key="3">
    <source>
    </source>
</evidence>
<evidence type="ECO:0000269" key="4">
    <source>
    </source>
</evidence>
<evidence type="ECO:0000305" key="5"/>
<evidence type="ECO:0007829" key="6">
    <source>
        <dbReference type="PDB" id="1BD8"/>
    </source>
</evidence>
<protein>
    <recommendedName>
        <fullName>Cyclin-dependent kinase 4 inhibitor D</fullName>
    </recommendedName>
    <alternativeName>
        <fullName>p19-INK4d</fullName>
    </alternativeName>
</protein>
<keyword id="KW-0002">3D-structure</keyword>
<keyword id="KW-0007">Acetylation</keyword>
<keyword id="KW-0040">ANK repeat</keyword>
<keyword id="KW-0131">Cell cycle</keyword>
<keyword id="KW-0963">Cytoplasm</keyword>
<keyword id="KW-0903">Direct protein sequencing</keyword>
<keyword id="KW-0539">Nucleus</keyword>
<keyword id="KW-1267">Proteomics identification</keyword>
<keyword id="KW-1185">Reference proteome</keyword>
<keyword id="KW-0677">Repeat</keyword>
<keyword id="KW-0043">Tumor suppressor</keyword>
<comment type="function">
    <text evidence="2 3">Interacts strongly with CDK4 and CDK6 and inhibits them.</text>
</comment>
<comment type="subunit">
    <text evidence="4">Interacts with CDK6.</text>
</comment>
<comment type="interaction">
    <interactant intactId="EBI-745859">
        <id>P55273</id>
    </interactant>
    <interactant intactId="EBI-946029">
        <id>Q6P1W5</id>
        <label>C1orf94</label>
    </interactant>
    <organismsDiffer>false</organismsDiffer>
    <experiments>5</experiments>
</comment>
<comment type="interaction">
    <interactant intactId="EBI-745859">
        <id>P55273</id>
    </interactant>
    <interactant intactId="EBI-375013">
        <id>P30281</id>
        <label>CCND3</label>
    </interactant>
    <organismsDiffer>false</organismsDiffer>
    <experiments>3</experiments>
</comment>
<comment type="interaction">
    <interactant intactId="EBI-745859">
        <id>P55273</id>
    </interactant>
    <interactant intactId="EBI-295644">
        <id>P11802</id>
        <label>CDK4</label>
    </interactant>
    <organismsDiffer>false</organismsDiffer>
    <experiments>28</experiments>
</comment>
<comment type="interaction">
    <interactant intactId="EBI-745859">
        <id>P55273</id>
    </interactant>
    <interactant intactId="EBI-295663">
        <id>Q00534</id>
        <label>CDK6</label>
    </interactant>
    <organismsDiffer>false</organismsDiffer>
    <experiments>26</experiments>
</comment>
<comment type="interaction">
    <interactant intactId="EBI-745859">
        <id>P55273</id>
    </interactant>
    <interactant intactId="EBI-12039847">
        <id>A4QMS7</id>
        <label>CFAP90</label>
    </interactant>
    <organismsDiffer>false</organismsDiffer>
    <experiments>3</experiments>
</comment>
<comment type="interaction">
    <interactant intactId="EBI-745859">
        <id>P55273</id>
    </interactant>
    <interactant intactId="EBI-723153">
        <id>Q9UFW8</id>
        <label>CGGBP1</label>
    </interactant>
    <organismsDiffer>false</organismsDiffer>
    <experiments>3</experiments>
</comment>
<comment type="interaction">
    <interactant intactId="EBI-745859">
        <id>P55273</id>
    </interactant>
    <interactant intactId="EBI-10171858">
        <id>Q13363-2</id>
        <label>CTBP1</label>
    </interactant>
    <organismsDiffer>false</organismsDiffer>
    <experiments>3</experiments>
</comment>
<comment type="interaction">
    <interactant intactId="EBI-745859">
        <id>P55273</id>
    </interactant>
    <interactant intactId="EBI-742054">
        <id>Q96D03</id>
        <label>DDIT4L</label>
    </interactant>
    <organismsDiffer>false</organismsDiffer>
    <experiments>3</experiments>
</comment>
<comment type="interaction">
    <interactant intactId="EBI-745859">
        <id>P55273</id>
    </interactant>
    <interactant intactId="EBI-2692044">
        <id>Q8WW35</id>
        <label>DYNLT2B</label>
    </interactant>
    <organismsDiffer>false</organismsDiffer>
    <experiments>3</experiments>
</comment>
<comment type="interaction">
    <interactant intactId="EBI-745859">
        <id>P55273</id>
    </interactant>
    <interactant intactId="EBI-12012124">
        <id>Q04637-9</id>
        <label>EIF4G1</label>
    </interactant>
    <organismsDiffer>false</organismsDiffer>
    <experiments>3</experiments>
</comment>
<comment type="interaction">
    <interactant intactId="EBI-745859">
        <id>P55273</id>
    </interactant>
    <interactant intactId="EBI-12958227">
        <id>Q86W67</id>
        <label>FAM228A</label>
    </interactant>
    <organismsDiffer>false</organismsDiffer>
    <experiments>3</experiments>
</comment>
<comment type="interaction">
    <interactant intactId="EBI-745859">
        <id>P55273</id>
    </interactant>
    <interactant intactId="EBI-12845222">
        <id>Q9NVL1-2</id>
        <label>FAM86C1P</label>
    </interactant>
    <organismsDiffer>false</organismsDiffer>
    <experiments>3</experiments>
</comment>
<comment type="interaction">
    <interactant intactId="EBI-745859">
        <id>P55273</id>
    </interactant>
    <interactant intactId="EBI-923440">
        <id>Q8WXI9</id>
        <label>GATAD2B</label>
    </interactant>
    <organismsDiffer>false</organismsDiffer>
    <experiments>3</experiments>
</comment>
<comment type="interaction">
    <interactant intactId="EBI-745859">
        <id>P55273</id>
    </interactant>
    <interactant intactId="EBI-12143817">
        <id>Q49A26-4</id>
        <label>GLYR1</label>
    </interactant>
    <organismsDiffer>false</organismsDiffer>
    <experiments>3</experiments>
</comment>
<comment type="interaction">
    <interactant intactId="EBI-745859">
        <id>P55273</id>
    </interactant>
    <interactant intactId="EBI-739467">
        <id>Q9H8Y8</id>
        <label>GORASP2</label>
    </interactant>
    <organismsDiffer>false</organismsDiffer>
    <experiments>3</experiments>
</comment>
<comment type="interaction">
    <interactant intactId="EBI-745859">
        <id>P55273</id>
    </interactant>
    <interactant intactId="EBI-19954058">
        <id>O15499</id>
        <label>GSC2</label>
    </interactant>
    <organismsDiffer>false</organismsDiffer>
    <experiments>3</experiments>
</comment>
<comment type="interaction">
    <interactant intactId="EBI-745859">
        <id>P55273</id>
    </interactant>
    <interactant intactId="EBI-742664">
        <id>Q9BPX1</id>
        <label>HSD17B14</label>
    </interactant>
    <organismsDiffer>false</organismsDiffer>
    <experiments>8</experiments>
</comment>
<comment type="interaction">
    <interactant intactId="EBI-745859">
        <id>P55273</id>
    </interactant>
    <interactant intactId="EBI-747204">
        <id>Q9UKT9</id>
        <label>IKZF3</label>
    </interactant>
    <organismsDiffer>false</organismsDiffer>
    <experiments>5</experiments>
</comment>
<comment type="interaction">
    <interactant intactId="EBI-745859">
        <id>P55273</id>
    </interactant>
    <interactant intactId="EBI-6509505">
        <id>Q0VD86</id>
        <label>INCA1</label>
    </interactant>
    <organismsDiffer>false</organismsDiffer>
    <experiments>9</experiments>
</comment>
<comment type="interaction">
    <interactant intactId="EBI-745859">
        <id>P55273</id>
    </interactant>
    <interactant intactId="EBI-2949715">
        <id>O95678</id>
        <label>KRT75</label>
    </interactant>
    <organismsDiffer>false</organismsDiffer>
    <experiments>3</experiments>
</comment>
<comment type="interaction">
    <interactant intactId="EBI-745859">
        <id>P55273</id>
    </interactant>
    <interactant intactId="EBI-739832">
        <id>Q8TBB1</id>
        <label>LNX1</label>
    </interactant>
    <organismsDiffer>false</organismsDiffer>
    <experiments>3</experiments>
</comment>
<comment type="interaction">
    <interactant intactId="EBI-745859">
        <id>P55273</id>
    </interactant>
    <interactant intactId="EBI-2341787">
        <id>Q17RB8</id>
        <label>LONRF1</label>
    </interactant>
    <organismsDiffer>false</organismsDiffer>
    <experiments>3</experiments>
</comment>
<comment type="interaction">
    <interactant intactId="EBI-745859">
        <id>P55273</id>
    </interactant>
    <interactant intactId="EBI-19944212">
        <id>A8MW99</id>
        <label>MEI4</label>
    </interactant>
    <organismsDiffer>false</organismsDiffer>
    <experiments>3</experiments>
</comment>
<comment type="interaction">
    <interactant intactId="EBI-745859">
        <id>P55273</id>
    </interactant>
    <interactant intactId="EBI-16439278">
        <id>Q6FHY5</id>
        <label>MEOX2</label>
    </interactant>
    <organismsDiffer>false</organismsDiffer>
    <experiments>3</experiments>
</comment>
<comment type="interaction">
    <interactant intactId="EBI-745859">
        <id>P55273</id>
    </interactant>
    <interactant intactId="EBI-11599933">
        <id>Q4VC12</id>
        <label>MSS51</label>
    </interactant>
    <organismsDiffer>false</organismsDiffer>
    <experiments>3</experiments>
</comment>
<comment type="interaction">
    <interactant intactId="EBI-745859">
        <id>P55273</id>
    </interactant>
    <interactant intactId="EBI-10698053">
        <id>Q9Y483-4</id>
        <label>MTF2</label>
    </interactant>
    <organismsDiffer>false</organismsDiffer>
    <experiments>3</experiments>
</comment>
<comment type="interaction">
    <interactant intactId="EBI-745859">
        <id>P55273</id>
    </interactant>
    <interactant intactId="EBI-1246238">
        <id>P17568</id>
        <label>NDUFB7</label>
    </interactant>
    <organismsDiffer>false</organismsDiffer>
    <experiments>3</experiments>
</comment>
<comment type="interaction">
    <interactant intactId="EBI-745859">
        <id>P55273</id>
    </interactant>
    <interactant intactId="EBI-740897">
        <id>Q9GZT8</id>
        <label>NIF3L1</label>
    </interactant>
    <organismsDiffer>false</organismsDiffer>
    <experiments>3</experiments>
</comment>
<comment type="interaction">
    <interactant intactId="EBI-745859">
        <id>P55273</id>
    </interactant>
    <interactant intactId="EBI-744871">
        <id>O00746</id>
        <label>NME4</label>
    </interactant>
    <organismsDiffer>false</organismsDiffer>
    <experiments>3</experiments>
</comment>
<comment type="interaction">
    <interactant intactId="EBI-745859">
        <id>P55273</id>
    </interactant>
    <interactant intactId="EBI-721550">
        <id>P22736</id>
        <label>NR4A1</label>
    </interactant>
    <organismsDiffer>false</organismsDiffer>
    <experiments>4</experiments>
</comment>
<comment type="interaction">
    <interactant intactId="EBI-745859">
        <id>P55273</id>
    </interactant>
    <interactant intactId="EBI-10214997">
        <id>F1D8N6</id>
        <label>NR4A2</label>
    </interactant>
    <organismsDiffer>false</organismsDiffer>
    <experiments>3</experiments>
</comment>
<comment type="interaction">
    <interactant intactId="EBI-745859">
        <id>P55273</id>
    </interactant>
    <interactant intactId="EBI-2681738">
        <id>P43354</id>
        <label>NR4A2</label>
    </interactant>
    <organismsDiffer>false</organismsDiffer>
    <experiments>4</experiments>
</comment>
<comment type="interaction">
    <interactant intactId="EBI-745859">
        <id>P55273</id>
    </interactant>
    <interactant intactId="EBI-13644623">
        <id>Q92570</id>
        <label>NR4A3</label>
    </interactant>
    <organismsDiffer>false</organismsDiffer>
    <experiments>3</experiments>
</comment>
<comment type="interaction">
    <interactant intactId="EBI-745859">
        <id>P55273</id>
    </interactant>
    <interactant intactId="EBI-79165">
        <id>Q9NRD5</id>
        <label>PICK1</label>
    </interactant>
    <organismsDiffer>false</organismsDiffer>
    <experiments>3</experiments>
</comment>
<comment type="interaction">
    <interactant intactId="EBI-745859">
        <id>P55273</id>
    </interactant>
    <interactant intactId="EBI-722161">
        <id>P30044</id>
        <label>PRDX5</label>
    </interactant>
    <organismsDiffer>false</organismsDiffer>
    <experiments>3</experiments>
</comment>
<comment type="interaction">
    <interactant intactId="EBI-745859">
        <id>P55273</id>
    </interactant>
    <interactant intactId="EBI-10044038">
        <id>Q96LW4</id>
        <label>PRIMPOL</label>
    </interactant>
    <organismsDiffer>false</organismsDiffer>
    <experiments>3</experiments>
</comment>
<comment type="interaction">
    <interactant intactId="EBI-745859">
        <id>P55273</id>
    </interactant>
    <interactant intactId="EBI-359352">
        <id>P25786</id>
        <label>PSMA1</label>
    </interactant>
    <organismsDiffer>false</organismsDiffer>
    <experiments>3</experiments>
</comment>
<comment type="interaction">
    <interactant intactId="EBI-745859">
        <id>P55273</id>
    </interactant>
    <interactant intactId="EBI-10829018">
        <id>Q04864-2</id>
        <label>REL</label>
    </interactant>
    <organismsDiffer>false</organismsDiffer>
    <experiments>3</experiments>
</comment>
<comment type="interaction">
    <interactant intactId="EBI-745859">
        <id>P55273</id>
    </interactant>
    <interactant intactId="EBI-10181525">
        <id>Q6ZNE9</id>
        <label>RUFY4</label>
    </interactant>
    <organismsDiffer>false</organismsDiffer>
    <experiments>3</experiments>
</comment>
<comment type="interaction">
    <interactant intactId="EBI-745859">
        <id>P55273</id>
    </interactant>
    <interactant intactId="EBI-3957636">
        <id>Q8IYX7</id>
        <label>SAXO1</label>
    </interactant>
    <organismsDiffer>false</organismsDiffer>
    <experiments>3</experiments>
</comment>
<comment type="interaction">
    <interactant intactId="EBI-745859">
        <id>P55273</id>
    </interactant>
    <interactant intactId="EBI-727004">
        <id>O00560</id>
        <label>SDCBP</label>
    </interactant>
    <organismsDiffer>false</organismsDiffer>
    <experiments>3</experiments>
</comment>
<comment type="interaction">
    <interactant intactId="EBI-745859">
        <id>P55273</id>
    </interactant>
    <interactant intactId="EBI-741515">
        <id>Q9NVV9</id>
        <label>THAP1</label>
    </interactant>
    <organismsDiffer>false</organismsDiffer>
    <experiments>3</experiments>
</comment>
<comment type="interaction">
    <interactant intactId="EBI-745859">
        <id>P55273</id>
    </interactant>
    <interactant intactId="EBI-10241197">
        <id>Q3SY00</id>
        <label>TSGA10IP</label>
    </interactant>
    <organismsDiffer>false</organismsDiffer>
    <experiments>3</experiments>
</comment>
<comment type="interaction">
    <interactant intactId="EBI-745859">
        <id>P55273</id>
    </interactant>
    <interactant intactId="EBI-1054584">
        <id>Q9BRT2</id>
        <label>UQCC2</label>
    </interactant>
    <organismsDiffer>false</organismsDiffer>
    <experiments>3</experiments>
</comment>
<comment type="interaction">
    <interactant intactId="EBI-745859">
        <id>P55273</id>
    </interactant>
    <interactant intactId="EBI-11983165">
        <id>Q99990</id>
        <label>VGLL1</label>
    </interactant>
    <organismsDiffer>false</organismsDiffer>
    <experiments>3</experiments>
</comment>
<comment type="interaction">
    <interactant intactId="EBI-745859">
        <id>P55273</id>
    </interactant>
    <interactant intactId="EBI-10188476">
        <id>A0A0C4DGF1</id>
        <label>ZBTB32</label>
    </interactant>
    <organismsDiffer>false</organismsDiffer>
    <experiments>3</experiments>
</comment>
<comment type="interaction">
    <interactant intactId="EBI-745859">
        <id>P55273</id>
    </interactant>
    <interactant intactId="EBI-12328453">
        <id>Q96N95-3</id>
        <label>ZNF396</label>
    </interactant>
    <organismsDiffer>false</organismsDiffer>
    <experiments>3</experiments>
</comment>
<comment type="interaction">
    <interactant intactId="EBI-745859">
        <id>P55273</id>
    </interactant>
    <interactant intactId="EBI-4395669">
        <id>Q6ZNG0</id>
        <label>ZNF620</label>
    </interactant>
    <organismsDiffer>false</organismsDiffer>
    <experiments>3</experiments>
</comment>
<comment type="interaction">
    <interactant intactId="EBI-745859">
        <id>P55273</id>
    </interactant>
    <interactant intactId="EBI-4395732">
        <id>P0C7X2</id>
        <label>ZNF688</label>
    </interactant>
    <organismsDiffer>false</organismsDiffer>
    <experiments>3</experiments>
</comment>
<comment type="interaction">
    <interactant intactId="EBI-745859">
        <id>P55273</id>
    </interactant>
    <interactant intactId="EBI-10251462">
        <id>Q6NX45</id>
        <label>ZNF774</label>
    </interactant>
    <organismsDiffer>false</organismsDiffer>
    <experiments>3</experiments>
</comment>
<comment type="subcellular location">
    <subcellularLocation>
        <location evidence="4">Nucleus</location>
    </subcellularLocation>
    <subcellularLocation>
        <location evidence="4">Cytoplasm</location>
    </subcellularLocation>
</comment>
<comment type="similarity">
    <text evidence="5">Belongs to the CDKN2 cyclin-dependent kinase inhibitor family.</text>
</comment>
<name>CDN2D_HUMAN</name>
<sequence length="166" mass="17700">MLLEEVRAGDRLSGAAARGDVQEVRRLLHRELVHPDALNRFGKTALQVMMFGSTAIALELLKQGASPNVQDTSGTSPVHDAARTGFLDTLKVLVEHGADVNVPDGTGALPIHLAVQEGHTAVVSFLAAESDLHRRDARGLTPLELALQRGAQDLVDILQGHMVAPL</sequence>
<reference key="1">
    <citation type="journal article" date="1995" name="Genomics">
        <title>Molecular cloning, expression pattern, and chromosomal localization of human CDKN2D/INK4d, an inhibitor of cyclin D-dependent kinases.</title>
        <authorList>
            <person name="Okuda T."/>
            <person name="Hirai H."/>
            <person name="Valentine V.A."/>
            <person name="Shurtleff S.A."/>
            <person name="Kidd V.J."/>
            <person name="Lahti J.M."/>
            <person name="Sherr C.J."/>
            <person name="Downing J.R."/>
        </authorList>
    </citation>
    <scope>NUCLEOTIDE SEQUENCE [MRNA]</scope>
    <source>
        <tissue>Bone marrow</tissue>
    </source>
</reference>
<reference key="2">
    <citation type="journal article" date="1995" name="Mol. Cell. Biol.">
        <title>Identification of human and mouse p19, a novel CDK4 and CDK6 inhibitor with homology to p16ink4.</title>
        <authorList>
            <person name="Chan F.K.M."/>
            <person name="Zhang J."/>
            <person name="Cheng L."/>
            <person name="Shapiro D.N."/>
            <person name="Winoto A."/>
        </authorList>
    </citation>
    <scope>NUCLEOTIDE SEQUENCE [MRNA]</scope>
    <scope>FUNCTION</scope>
    <source>
        <tissue>Thymus</tissue>
    </source>
</reference>
<reference key="3">
    <citation type="journal article" date="1996" name="Mol. Biol. Cell">
        <title>Isolation and characterization of p19INK4d, a p16-related inhibitor specific to CDK6 and CDK4.</title>
        <authorList>
            <person name="Guan K.L."/>
            <person name="Jenkins C.W."/>
            <person name="Li Y."/>
            <person name="O'Keefe C.L."/>
            <person name="Noh S."/>
            <person name="Wu X."/>
            <person name="Zariwala M."/>
            <person name="Matera A.G."/>
            <person name="Xiong Y."/>
        </authorList>
    </citation>
    <scope>NUCLEOTIDE SEQUENCE [MRNA]</scope>
    <scope>FUNCTION</scope>
</reference>
<reference key="4">
    <citation type="journal article" date="1999" name="Br. J. Cancer">
        <title>Mutation testing in melanoma families: INK4A, CDK4 and INK4D.</title>
        <authorList>
            <person name="Newton Bishop J.A."/>
            <person name="Harland M."/>
            <person name="Bennett D.C."/>
            <person name="Bataille V."/>
            <person name="Goldstein A.M."/>
            <person name="Tucker M.A."/>
            <person name="Ponder B.A.J."/>
            <person name="Cuzick J."/>
            <person name="Selby P."/>
            <person name="Bishop D.T."/>
        </authorList>
    </citation>
    <scope>NUCLEOTIDE SEQUENCE [GENOMIC DNA]</scope>
</reference>
<reference key="5">
    <citation type="submission" date="2004-06" db="EMBL/GenBank/DDBJ databases">
        <title>Cloning of human full open reading frames in Gateway(TM) system entry vector (pDONR201).</title>
        <authorList>
            <person name="Ebert L."/>
            <person name="Schick M."/>
            <person name="Neubert P."/>
            <person name="Schatten R."/>
            <person name="Henze S."/>
            <person name="Korn B."/>
        </authorList>
    </citation>
    <scope>NUCLEOTIDE SEQUENCE [LARGE SCALE MRNA]</scope>
</reference>
<reference key="6">
    <citation type="submission" date="2002-06" db="EMBL/GenBank/DDBJ databases">
        <authorList>
            <consortium name="NIEHS SNPs program"/>
        </authorList>
    </citation>
    <scope>NUCLEOTIDE SEQUENCE [GENOMIC DNA]</scope>
</reference>
<reference key="7">
    <citation type="journal article" date="2004" name="Genome Res.">
        <title>The status, quality, and expansion of the NIH full-length cDNA project: the Mammalian Gene Collection (MGC).</title>
        <authorList>
            <consortium name="The MGC Project Team"/>
        </authorList>
    </citation>
    <scope>NUCLEOTIDE SEQUENCE [LARGE SCALE MRNA]</scope>
    <source>
        <tissue>Muscle</tissue>
    </source>
</reference>
<reference key="8">
    <citation type="submission" date="1998-01" db="EMBL/GenBank/DDBJ databases">
        <authorList>
            <person name="Murthy S.K."/>
            <person name="Demetrick D.J."/>
        </authorList>
    </citation>
    <scope>NUCLEOTIDE SEQUENCE [GENOMIC DNA] OF 1-30</scope>
</reference>
<reference key="9">
    <citation type="journal article" date="2003" name="Nat. Biotechnol.">
        <title>Exploring proteomes and analyzing protein processing by mass spectrometric identification of sorted N-terminal peptides.</title>
        <authorList>
            <person name="Gevaert K."/>
            <person name="Goethals M."/>
            <person name="Martens L."/>
            <person name="Van Damme J."/>
            <person name="Staes A."/>
            <person name="Thomas G.R."/>
            <person name="Vandekerckhove J."/>
        </authorList>
    </citation>
    <scope>PROTEIN SEQUENCE OF 1-7</scope>
    <scope>ACETYLATION AT MET-1</scope>
    <source>
        <tissue>Platelet</tissue>
    </source>
</reference>
<reference key="10">
    <citation type="journal article" date="1998" name="Oncogene">
        <title>Active cdk6 complexes are predominantly nuclear and represent only a minority of the cdk6 in T cells.</title>
        <authorList>
            <person name="Mahony D."/>
            <person name="Parry D.A."/>
            <person name="Lees E."/>
        </authorList>
    </citation>
    <scope>SUBCELLULAR LOCATION</scope>
    <scope>INTERACTION WITH CDK6</scope>
</reference>
<reference key="11">
    <citation type="journal article" date="2012" name="Proc. Natl. Acad. Sci. U.S.A.">
        <title>N-terminal acetylome analyses and functional insights of the N-terminal acetyltransferase NatB.</title>
        <authorList>
            <person name="Van Damme P."/>
            <person name="Lasa M."/>
            <person name="Polevoda B."/>
            <person name="Gazquez C."/>
            <person name="Elosegui-Artola A."/>
            <person name="Kim D.S."/>
            <person name="De Juan-Pardo E."/>
            <person name="Demeyer K."/>
            <person name="Hole K."/>
            <person name="Larrea E."/>
            <person name="Timmerman E."/>
            <person name="Prieto J."/>
            <person name="Arnesen T."/>
            <person name="Sherman F."/>
            <person name="Gevaert K."/>
            <person name="Aldabe R."/>
        </authorList>
    </citation>
    <scope>IDENTIFICATION BY MASS SPECTROMETRY [LARGE SCALE ANALYSIS]</scope>
</reference>
<reference key="12">
    <citation type="journal article" date="1998" name="Nature">
        <title>Structural basis for inhibition of the cyclin-dependent kinase Cdk6 by the tumour suppressor p16INK4a.</title>
        <authorList>
            <person name="Russo A.A."/>
            <person name="Tong L."/>
            <person name="Lee J.O."/>
            <person name="Jeffrey P.D."/>
            <person name="Pavletich N.P."/>
        </authorList>
    </citation>
    <scope>X-RAY CRYSTALLOGRAPHY (2.8 ANGSTROMS) OF COMPLEX WITH CDK6</scope>
</reference>
<reference key="13">
    <citation type="journal article" date="1998" name="Structure">
        <title>Structure of human cyclin-dependent kinase inhibitor p19(INK4d): comparison to known ankyrin-repeat-containing structures and implications for the dysfunction of tumor suppressor p16(INK4a).</title>
        <authorList>
            <person name="Baumgartner R."/>
            <person name="Fernandez-Catalan C."/>
            <person name="Winoto A."/>
            <person name="Huber R."/>
            <person name="Engh R.A."/>
            <person name="Holak T.A."/>
        </authorList>
    </citation>
    <scope>X-RAY CRYSTALLOGRAPHY (1.8 ANGSTROMS)</scope>
</reference>